<accession>A4VNY2</accession>
<protein>
    <recommendedName>
        <fullName evidence="1">Cysteine desulfurase IscS</fullName>
        <ecNumber evidence="1">2.8.1.7</ecNumber>
    </recommendedName>
</protein>
<sequence>MKLPIYLDYSATTPVDPRVAEKMIECLTNEGNFGNPASRSHAFGWKAEEAVENARRQVAELVNADPREIVWTSGATESDNLAIKGVAHFYASKGKHIVTTKIEHKAVLDTTRQLEREGFEVTYIEPGDDGIVTPAMVEAALREDTILVSVMHVNNEIGTINDITAIGELTRARGILFHVDAAQSTGKVEIDLEKIKVDLMSFSAHKTYGPKGVGALYVRRKPRVRLEAQMHGGGHERGMRSGTLATHQLVGMGEAFRIAKQEMAQENERIRALRDRFYKQVEHLEELYVNGSMTARVPHNLNLSFNYVEGESLIMALKDLAVSSGSACTSASLEPSYVLRALGRNDELAHSSIRFTFGRFTTEEEIDYAAQKVCEAVTKLRELSPLWDMFKDGVDISKVEWQAH</sequence>
<reference key="1">
    <citation type="journal article" date="2008" name="Proc. Natl. Acad. Sci. U.S.A.">
        <title>Nitrogen fixation island and rhizosphere competence traits in the genome of root-associated Pseudomonas stutzeri A1501.</title>
        <authorList>
            <person name="Yan Y."/>
            <person name="Yang J."/>
            <person name="Dou Y."/>
            <person name="Chen M."/>
            <person name="Ping S."/>
            <person name="Peng J."/>
            <person name="Lu W."/>
            <person name="Zhang W."/>
            <person name="Yao Z."/>
            <person name="Li H."/>
            <person name="Liu W."/>
            <person name="He S."/>
            <person name="Geng L."/>
            <person name="Zhang X."/>
            <person name="Yang F."/>
            <person name="Yu H."/>
            <person name="Zhan Y."/>
            <person name="Li D."/>
            <person name="Lin Z."/>
            <person name="Wang Y."/>
            <person name="Elmerich C."/>
            <person name="Lin M."/>
            <person name="Jin Q."/>
        </authorList>
    </citation>
    <scope>NUCLEOTIDE SEQUENCE [LARGE SCALE GENOMIC DNA]</scope>
    <source>
        <strain>A1501</strain>
    </source>
</reference>
<feature type="chain" id="PRO_1000019431" description="Cysteine desulfurase IscS">
    <location>
        <begin position="1"/>
        <end position="404"/>
    </location>
</feature>
<feature type="active site" description="Cysteine persulfide intermediate" evidence="1">
    <location>
        <position position="328"/>
    </location>
</feature>
<feature type="binding site" evidence="1">
    <location>
        <begin position="75"/>
        <end position="76"/>
    </location>
    <ligand>
        <name>pyridoxal 5'-phosphate</name>
        <dbReference type="ChEBI" id="CHEBI:597326"/>
    </ligand>
</feature>
<feature type="binding site" evidence="1">
    <location>
        <position position="155"/>
    </location>
    <ligand>
        <name>pyridoxal 5'-phosphate</name>
        <dbReference type="ChEBI" id="CHEBI:597326"/>
    </ligand>
</feature>
<feature type="binding site" evidence="1">
    <location>
        <position position="183"/>
    </location>
    <ligand>
        <name>pyridoxal 5'-phosphate</name>
        <dbReference type="ChEBI" id="CHEBI:597326"/>
    </ligand>
</feature>
<feature type="binding site" evidence="1">
    <location>
        <begin position="203"/>
        <end position="205"/>
    </location>
    <ligand>
        <name>pyridoxal 5'-phosphate</name>
        <dbReference type="ChEBI" id="CHEBI:597326"/>
    </ligand>
</feature>
<feature type="binding site" evidence="1">
    <location>
        <position position="243"/>
    </location>
    <ligand>
        <name>pyridoxal 5'-phosphate</name>
        <dbReference type="ChEBI" id="CHEBI:597326"/>
    </ligand>
</feature>
<feature type="binding site" description="via persulfide group" evidence="1">
    <location>
        <position position="328"/>
    </location>
    <ligand>
        <name>[2Fe-2S] cluster</name>
        <dbReference type="ChEBI" id="CHEBI:190135"/>
        <note>ligand shared with IscU</note>
    </ligand>
</feature>
<feature type="modified residue" description="N6-(pyridoxal phosphate)lysine" evidence="1">
    <location>
        <position position="206"/>
    </location>
</feature>
<evidence type="ECO:0000255" key="1">
    <source>
        <dbReference type="HAMAP-Rule" id="MF_00331"/>
    </source>
</evidence>
<name>ISCS_STUS1</name>
<proteinExistence type="inferred from homology"/>
<keyword id="KW-0001">2Fe-2S</keyword>
<keyword id="KW-0963">Cytoplasm</keyword>
<keyword id="KW-0408">Iron</keyword>
<keyword id="KW-0411">Iron-sulfur</keyword>
<keyword id="KW-0479">Metal-binding</keyword>
<keyword id="KW-0663">Pyridoxal phosphate</keyword>
<keyword id="KW-1185">Reference proteome</keyword>
<keyword id="KW-0808">Transferase</keyword>
<gene>
    <name evidence="1" type="primary">iscS</name>
    <name type="ordered locus">PST_3042</name>
</gene>
<organism>
    <name type="scientific">Stutzerimonas stutzeri (strain A1501)</name>
    <name type="common">Pseudomonas stutzeri</name>
    <dbReference type="NCBI Taxonomy" id="379731"/>
    <lineage>
        <taxon>Bacteria</taxon>
        <taxon>Pseudomonadati</taxon>
        <taxon>Pseudomonadota</taxon>
        <taxon>Gammaproteobacteria</taxon>
        <taxon>Pseudomonadales</taxon>
        <taxon>Pseudomonadaceae</taxon>
        <taxon>Stutzerimonas</taxon>
    </lineage>
</organism>
<dbReference type="EC" id="2.8.1.7" evidence="1"/>
<dbReference type="EMBL" id="CP000304">
    <property type="protein sequence ID" value="ABP80683.1"/>
    <property type="molecule type" value="Genomic_DNA"/>
</dbReference>
<dbReference type="RefSeq" id="WP_011914137.1">
    <property type="nucleotide sequence ID" value="NC_009434.1"/>
</dbReference>
<dbReference type="SMR" id="A4VNY2"/>
<dbReference type="KEGG" id="psa:PST_3042"/>
<dbReference type="eggNOG" id="COG1104">
    <property type="taxonomic scope" value="Bacteria"/>
</dbReference>
<dbReference type="HOGENOM" id="CLU_003433_0_2_6"/>
<dbReference type="UniPathway" id="UPA00266"/>
<dbReference type="Proteomes" id="UP000000233">
    <property type="component" value="Chromosome"/>
</dbReference>
<dbReference type="GO" id="GO:1990221">
    <property type="term" value="C:L-cysteine desulfurase complex"/>
    <property type="evidence" value="ECO:0007669"/>
    <property type="project" value="UniProtKB-ARBA"/>
</dbReference>
<dbReference type="GO" id="GO:0051537">
    <property type="term" value="F:2 iron, 2 sulfur cluster binding"/>
    <property type="evidence" value="ECO:0007669"/>
    <property type="project" value="UniProtKB-UniRule"/>
</dbReference>
<dbReference type="GO" id="GO:0031071">
    <property type="term" value="F:cysteine desulfurase activity"/>
    <property type="evidence" value="ECO:0007669"/>
    <property type="project" value="UniProtKB-UniRule"/>
</dbReference>
<dbReference type="GO" id="GO:0046872">
    <property type="term" value="F:metal ion binding"/>
    <property type="evidence" value="ECO:0007669"/>
    <property type="project" value="UniProtKB-KW"/>
</dbReference>
<dbReference type="GO" id="GO:0030170">
    <property type="term" value="F:pyridoxal phosphate binding"/>
    <property type="evidence" value="ECO:0007669"/>
    <property type="project" value="UniProtKB-UniRule"/>
</dbReference>
<dbReference type="GO" id="GO:0044571">
    <property type="term" value="P:[2Fe-2S] cluster assembly"/>
    <property type="evidence" value="ECO:0007669"/>
    <property type="project" value="UniProtKB-UniRule"/>
</dbReference>
<dbReference type="FunFam" id="3.40.640.10:FF:000003">
    <property type="entry name" value="Cysteine desulfurase IscS"/>
    <property type="match status" value="1"/>
</dbReference>
<dbReference type="FunFam" id="3.90.1150.10:FF:000002">
    <property type="entry name" value="Cysteine desulfurase IscS"/>
    <property type="match status" value="1"/>
</dbReference>
<dbReference type="Gene3D" id="3.90.1150.10">
    <property type="entry name" value="Aspartate Aminotransferase, domain 1"/>
    <property type="match status" value="1"/>
</dbReference>
<dbReference type="Gene3D" id="3.40.640.10">
    <property type="entry name" value="Type I PLP-dependent aspartate aminotransferase-like (Major domain)"/>
    <property type="match status" value="1"/>
</dbReference>
<dbReference type="HAMAP" id="MF_00331">
    <property type="entry name" value="Cys_desulf_IscS"/>
    <property type="match status" value="1"/>
</dbReference>
<dbReference type="InterPro" id="IPR000192">
    <property type="entry name" value="Aminotrans_V_dom"/>
</dbReference>
<dbReference type="InterPro" id="IPR020578">
    <property type="entry name" value="Aminotrans_V_PyrdxlP_BS"/>
</dbReference>
<dbReference type="InterPro" id="IPR010240">
    <property type="entry name" value="Cys_deSase_IscS"/>
</dbReference>
<dbReference type="InterPro" id="IPR016454">
    <property type="entry name" value="Cysteine_dSase"/>
</dbReference>
<dbReference type="InterPro" id="IPR015424">
    <property type="entry name" value="PyrdxlP-dep_Trfase"/>
</dbReference>
<dbReference type="InterPro" id="IPR015421">
    <property type="entry name" value="PyrdxlP-dep_Trfase_major"/>
</dbReference>
<dbReference type="InterPro" id="IPR015422">
    <property type="entry name" value="PyrdxlP-dep_Trfase_small"/>
</dbReference>
<dbReference type="NCBIfam" id="TIGR02006">
    <property type="entry name" value="IscS"/>
    <property type="match status" value="1"/>
</dbReference>
<dbReference type="NCBIfam" id="NF010611">
    <property type="entry name" value="PRK14012.1"/>
    <property type="match status" value="1"/>
</dbReference>
<dbReference type="PANTHER" id="PTHR11601:SF34">
    <property type="entry name" value="CYSTEINE DESULFURASE"/>
    <property type="match status" value="1"/>
</dbReference>
<dbReference type="PANTHER" id="PTHR11601">
    <property type="entry name" value="CYSTEINE DESULFURYLASE FAMILY MEMBER"/>
    <property type="match status" value="1"/>
</dbReference>
<dbReference type="Pfam" id="PF00266">
    <property type="entry name" value="Aminotran_5"/>
    <property type="match status" value="1"/>
</dbReference>
<dbReference type="PIRSF" id="PIRSF005572">
    <property type="entry name" value="NifS"/>
    <property type="match status" value="1"/>
</dbReference>
<dbReference type="SUPFAM" id="SSF53383">
    <property type="entry name" value="PLP-dependent transferases"/>
    <property type="match status" value="1"/>
</dbReference>
<dbReference type="PROSITE" id="PS00595">
    <property type="entry name" value="AA_TRANSFER_CLASS_5"/>
    <property type="match status" value="1"/>
</dbReference>
<comment type="function">
    <text evidence="1">Master enzyme that delivers sulfur to a number of partners involved in Fe-S cluster assembly, tRNA modification or cofactor biosynthesis. Catalyzes the removal of elemental sulfur atoms from cysteine to produce alanine. Functions as a sulfur delivery protein for Fe-S cluster synthesis onto IscU, an Fe-S scaffold assembly protein, as well as other S acceptor proteins.</text>
</comment>
<comment type="catalytic activity">
    <reaction evidence="1">
        <text>(sulfur carrier)-H + L-cysteine = (sulfur carrier)-SH + L-alanine</text>
        <dbReference type="Rhea" id="RHEA:43892"/>
        <dbReference type="Rhea" id="RHEA-COMP:14737"/>
        <dbReference type="Rhea" id="RHEA-COMP:14739"/>
        <dbReference type="ChEBI" id="CHEBI:29917"/>
        <dbReference type="ChEBI" id="CHEBI:35235"/>
        <dbReference type="ChEBI" id="CHEBI:57972"/>
        <dbReference type="ChEBI" id="CHEBI:64428"/>
        <dbReference type="EC" id="2.8.1.7"/>
    </reaction>
</comment>
<comment type="cofactor">
    <cofactor evidence="1">
        <name>pyridoxal 5'-phosphate</name>
        <dbReference type="ChEBI" id="CHEBI:597326"/>
    </cofactor>
</comment>
<comment type="pathway">
    <text evidence="1">Cofactor biosynthesis; iron-sulfur cluster biosynthesis.</text>
</comment>
<comment type="subunit">
    <text evidence="1">Homodimer. Forms a heterotetramer with IscU, interacts with other sulfur acceptors.</text>
</comment>
<comment type="subcellular location">
    <subcellularLocation>
        <location evidence="1">Cytoplasm</location>
    </subcellularLocation>
</comment>
<comment type="similarity">
    <text evidence="1">Belongs to the class-V pyridoxal-phosphate-dependent aminotransferase family. NifS/IscS subfamily.</text>
</comment>